<dbReference type="EC" id="3.1.1.4"/>
<dbReference type="EMBL" id="AY691660">
    <property type="protein sequence ID" value="AAY47069.1"/>
    <property type="molecule type" value="mRNA"/>
</dbReference>
<dbReference type="EMBL" id="DQ085814">
    <property type="protein sequence ID" value="AAZ22632.1"/>
    <property type="molecule type" value="mRNA"/>
</dbReference>
<dbReference type="SMR" id="Q4VRI5"/>
<dbReference type="GO" id="GO:0005576">
    <property type="term" value="C:extracellular region"/>
    <property type="evidence" value="ECO:0007669"/>
    <property type="project" value="UniProtKB-SubCell"/>
</dbReference>
<dbReference type="GO" id="GO:0005509">
    <property type="term" value="F:calcium ion binding"/>
    <property type="evidence" value="ECO:0007669"/>
    <property type="project" value="InterPro"/>
</dbReference>
<dbReference type="GO" id="GO:0047498">
    <property type="term" value="F:calcium-dependent phospholipase A2 activity"/>
    <property type="evidence" value="ECO:0007669"/>
    <property type="project" value="TreeGrafter"/>
</dbReference>
<dbReference type="GO" id="GO:0005543">
    <property type="term" value="F:phospholipid binding"/>
    <property type="evidence" value="ECO:0007669"/>
    <property type="project" value="TreeGrafter"/>
</dbReference>
<dbReference type="GO" id="GO:0005102">
    <property type="term" value="F:signaling receptor binding"/>
    <property type="evidence" value="ECO:0007669"/>
    <property type="project" value="TreeGrafter"/>
</dbReference>
<dbReference type="GO" id="GO:0050482">
    <property type="term" value="P:arachidonate secretion"/>
    <property type="evidence" value="ECO:0007669"/>
    <property type="project" value="InterPro"/>
</dbReference>
<dbReference type="GO" id="GO:0006633">
    <property type="term" value="P:fatty acid biosynthetic process"/>
    <property type="evidence" value="ECO:0007669"/>
    <property type="project" value="TreeGrafter"/>
</dbReference>
<dbReference type="GO" id="GO:0016042">
    <property type="term" value="P:lipid catabolic process"/>
    <property type="evidence" value="ECO:0007669"/>
    <property type="project" value="UniProtKB-KW"/>
</dbReference>
<dbReference type="GO" id="GO:0006644">
    <property type="term" value="P:phospholipid metabolic process"/>
    <property type="evidence" value="ECO:0007669"/>
    <property type="project" value="InterPro"/>
</dbReference>
<dbReference type="GO" id="GO:0048146">
    <property type="term" value="P:positive regulation of fibroblast proliferation"/>
    <property type="evidence" value="ECO:0007669"/>
    <property type="project" value="TreeGrafter"/>
</dbReference>
<dbReference type="CDD" id="cd00125">
    <property type="entry name" value="PLA2c"/>
    <property type="match status" value="1"/>
</dbReference>
<dbReference type="FunFam" id="1.20.90.10:FF:000007">
    <property type="entry name" value="Acidic phospholipase A2"/>
    <property type="match status" value="1"/>
</dbReference>
<dbReference type="Gene3D" id="1.20.90.10">
    <property type="entry name" value="Phospholipase A2 domain"/>
    <property type="match status" value="1"/>
</dbReference>
<dbReference type="InterPro" id="IPR001211">
    <property type="entry name" value="PLipase_A2"/>
</dbReference>
<dbReference type="InterPro" id="IPR033112">
    <property type="entry name" value="PLipase_A2_Asp_AS"/>
</dbReference>
<dbReference type="InterPro" id="IPR016090">
    <property type="entry name" value="PLipase_A2_dom"/>
</dbReference>
<dbReference type="InterPro" id="IPR036444">
    <property type="entry name" value="PLipase_A2_dom_sf"/>
</dbReference>
<dbReference type="InterPro" id="IPR033113">
    <property type="entry name" value="PLipase_A2_His_AS"/>
</dbReference>
<dbReference type="PANTHER" id="PTHR11716:SF94">
    <property type="entry name" value="PHOSPHOLIPASE A2"/>
    <property type="match status" value="1"/>
</dbReference>
<dbReference type="PANTHER" id="PTHR11716">
    <property type="entry name" value="PHOSPHOLIPASE A2 FAMILY MEMBER"/>
    <property type="match status" value="1"/>
</dbReference>
<dbReference type="Pfam" id="PF00068">
    <property type="entry name" value="Phospholip_A2_1"/>
    <property type="match status" value="1"/>
</dbReference>
<dbReference type="PRINTS" id="PR00389">
    <property type="entry name" value="PHPHLIPASEA2"/>
</dbReference>
<dbReference type="SMART" id="SM00085">
    <property type="entry name" value="PA2c"/>
    <property type="match status" value="1"/>
</dbReference>
<dbReference type="SUPFAM" id="SSF48619">
    <property type="entry name" value="Phospholipase A2, PLA2"/>
    <property type="match status" value="1"/>
</dbReference>
<dbReference type="PROSITE" id="PS00119">
    <property type="entry name" value="PA2_ASP"/>
    <property type="match status" value="1"/>
</dbReference>
<dbReference type="PROSITE" id="PS00118">
    <property type="entry name" value="PA2_HIS"/>
    <property type="match status" value="1"/>
</dbReference>
<evidence type="ECO:0000250" key="1"/>
<evidence type="ECO:0000255" key="2">
    <source>
        <dbReference type="PROSITE-ProRule" id="PRU10035"/>
    </source>
</evidence>
<evidence type="ECO:0000255" key="3">
    <source>
        <dbReference type="PROSITE-ProRule" id="PRU10036"/>
    </source>
</evidence>
<evidence type="ECO:0000269" key="4">
    <source>
    </source>
</evidence>
<evidence type="ECO:0000269" key="5">
    <source>
    </source>
</evidence>
<evidence type="ECO:0000269" key="6">
    <source>
    </source>
</evidence>
<evidence type="ECO:0000269" key="7">
    <source>
    </source>
</evidence>
<evidence type="ECO:0000305" key="8"/>
<name>PA21_OXYSC</name>
<sequence>MHPAHLLVLLAVCVSLLGAARIPPLPLSLLNFANLIECANHGTRSALAYADYGCYCGKGGRGTPLDDLDRCCHVHDDCYGEAEKLPACNYLMSSPYFNSYSYKCNEGKVTCTDDNDECKAFICNCDRTAAICFAGATYNDENFMISKKRNDICQ</sequence>
<accession>Q4VRI5</accession>
<accession>Q45Z52</accession>
<keyword id="KW-0106">Calcium</keyword>
<keyword id="KW-0903">Direct protein sequencing</keyword>
<keyword id="KW-1015">Disulfide bond</keyword>
<keyword id="KW-0378">Hydrolase</keyword>
<keyword id="KW-0442">Lipid degradation</keyword>
<keyword id="KW-0443">Lipid metabolism</keyword>
<keyword id="KW-0479">Metal-binding</keyword>
<keyword id="KW-0964">Secreted</keyword>
<keyword id="KW-0732">Signal</keyword>
<organism>
    <name type="scientific">Oxyuranus scutellatus scutellatus</name>
    <name type="common">Australian taipan</name>
    <name type="synonym">Coastal taipan</name>
    <dbReference type="NCBI Taxonomy" id="8667"/>
    <lineage>
        <taxon>Eukaryota</taxon>
        <taxon>Metazoa</taxon>
        <taxon>Chordata</taxon>
        <taxon>Craniata</taxon>
        <taxon>Vertebrata</taxon>
        <taxon>Euteleostomi</taxon>
        <taxon>Lepidosauria</taxon>
        <taxon>Squamata</taxon>
        <taxon>Bifurcata</taxon>
        <taxon>Unidentata</taxon>
        <taxon>Episquamata</taxon>
        <taxon>Toxicofera</taxon>
        <taxon>Serpentes</taxon>
        <taxon>Colubroidea</taxon>
        <taxon>Elapidae</taxon>
        <taxon>Hydrophiinae</taxon>
        <taxon>Oxyuranus</taxon>
    </lineage>
</organism>
<protein>
    <recommendedName>
        <fullName>Phospholipase A2 OS1</fullName>
        <shortName>PLA2</shortName>
        <ecNumber>3.1.1.4</ecNumber>
    </recommendedName>
    <alternativeName>
        <fullName>OS5</fullName>
    </alternativeName>
    <alternativeName>
        <fullName>Phosphatidylcholine 2-acylhydrolase</fullName>
    </alternativeName>
</protein>
<comment type="function">
    <text evidence="4 5 6 7">Snake venom phospholipase A2 (PLA2) that has a low specific activity on phospholipid substrates, and is neither neurotoxic, nor myotoxic. Induces endothelial cell migration which is mediated, at least in part, by its hydrolytic products (PubMed:11090064). Shows antimalarial activity, but is not able to potently inhibit HIV-1 replication (PubMed:16669624). Binds in a calcium-independent fashion with very high affinity to a muscle-type (M-type) PLA2 receptor, but is a very poor ligand for neuronal-type (N-type) receptors. PLA2 catalyzes the calcium-dependent hydrolysis of the 2-acyl groups in 3-sn-phosphoglycerides.</text>
</comment>
<comment type="catalytic activity">
    <reaction evidence="2 3">
        <text>a 1,2-diacyl-sn-glycero-3-phosphocholine + H2O = a 1-acyl-sn-glycero-3-phosphocholine + a fatty acid + H(+)</text>
        <dbReference type="Rhea" id="RHEA:15801"/>
        <dbReference type="ChEBI" id="CHEBI:15377"/>
        <dbReference type="ChEBI" id="CHEBI:15378"/>
        <dbReference type="ChEBI" id="CHEBI:28868"/>
        <dbReference type="ChEBI" id="CHEBI:57643"/>
        <dbReference type="ChEBI" id="CHEBI:58168"/>
        <dbReference type="EC" id="3.1.1.4"/>
    </reaction>
</comment>
<comment type="cofactor">
    <cofactor evidence="1">
        <name>Ca(2+)</name>
        <dbReference type="ChEBI" id="CHEBI:29108"/>
    </cofactor>
    <text evidence="1">Binds 1 Ca(2+) ion.</text>
</comment>
<comment type="subunit">
    <text evidence="7">Monomer.</text>
</comment>
<comment type="subcellular location">
    <subcellularLocation>
        <location>Secreted</location>
    </subcellularLocation>
</comment>
<comment type="tissue specificity">
    <text>Expressed by the venom gland.</text>
</comment>
<comment type="toxic dose">
    <text evidence="6">LD(100) is 3500 ug/kg by intracerebroventricular injection into mice.</text>
</comment>
<comment type="similarity">
    <text evidence="8">Belongs to the phospholipase A2 family. Group I subfamily. D49 sub-subfamily.</text>
</comment>
<proteinExistence type="evidence at protein level"/>
<reference key="1">
    <citation type="submission" date="2004-07" db="EMBL/GenBank/DDBJ databases">
        <authorList>
            <person name="Welton R.E."/>
            <person name="Burnell J.N."/>
        </authorList>
    </citation>
    <scope>NUCLEOTIDE SEQUENCE [MRNA]</scope>
    <source>
        <tissue>Venom gland</tissue>
    </source>
</reference>
<reference key="2">
    <citation type="journal article" date="2005" name="Cell. Mol. Life Sci.">
        <title>Identification and analysis of venom gland-specific genes from the coastal taipan (Oxyuranus scutellatus) and related species.</title>
        <authorList>
            <person name="St Pierre L."/>
            <person name="Woods R."/>
            <person name="Earl S.T.H."/>
            <person name="Masci P.P."/>
            <person name="Lavin M.F."/>
        </authorList>
    </citation>
    <scope>NUCLEOTIDE SEQUENCE [MRNA]</scope>
    <source>
        <tissue>Venom gland</tissue>
    </source>
</reference>
<reference key="3">
    <citation type="journal article" date="1995" name="J. Biol. Chem.">
        <title>Structural elements of secretory phospholipases A2 involved in the binding to M-type receptors.</title>
        <authorList>
            <person name="Lambeau G."/>
            <person name="Ancian P."/>
            <person name="Nicolas J.P."/>
            <person name="Beiboer S.H."/>
            <person name="Moinier D."/>
            <person name="Verheij H."/>
            <person name="Lazdunski M."/>
        </authorList>
    </citation>
    <scope>PROTEIN SEQUENCE OF 28-154</scope>
    <source>
        <tissue>Venom</tissue>
    </source>
</reference>
<reference key="4">
    <citation type="journal article" date="1990" name="J. Biol. Chem.">
        <title>Identification and purification of a very high affinity binding protein for toxic phospholipases A2 in skeletal muscle.</title>
        <authorList>
            <person name="Lambeau G."/>
            <person name="Schmid-Alliana A."/>
            <person name="Lazdunski M."/>
            <person name="Barhanin J."/>
        </authorList>
    </citation>
    <scope>FUNCTION</scope>
    <scope>SUBUNIT</scope>
    <source>
        <tissue>Venom</tissue>
    </source>
</reference>
<reference key="5">
    <citation type="journal article" date="1999" name="Neurosci. Lett.">
        <title>Secretory phospholipase A2 potentiates glutamate-induced rat striatal neuronal cell death in vivo.</title>
        <authorList>
            <person name="Kolko M."/>
            <person name="Bruhn T."/>
            <person name="Christensen T."/>
            <person name="Lazdunski M."/>
            <person name="Lambeau G."/>
            <person name="Bazan N.G."/>
            <person name="Diemer N.H."/>
        </authorList>
    </citation>
    <scope>FUNCTION</scope>
    <scope>BIOASSAY</scope>
</reference>
<reference key="6">
    <citation type="journal article" date="2000" name="Blood">
        <title>Secreted phospholipase A(2) induces vascular endothelial cell migration.</title>
        <authorList>
            <person name="Rizzo M.T."/>
            <person name="Nguyen E."/>
            <person name="Aldo-Benson M."/>
            <person name="Lambeau G."/>
        </authorList>
    </citation>
    <scope>FUNCTION IN CELL MIGRATION</scope>
</reference>
<reference key="7">
    <citation type="journal article" date="2006" name="Biochemistry">
        <title>Neurotoxicity and other pharmacological activities of the snake venom phospholipase A2 OS2: the N-terminal region is more important than enzymatic activity.</title>
        <authorList>
            <person name="Rouault M."/>
            <person name="Rash L.D."/>
            <person name="Escoubas P."/>
            <person name="Boilard E."/>
            <person name="Bollinger J."/>
            <person name="Lomonte B."/>
            <person name="Maurin T."/>
            <person name="Guillaume C."/>
            <person name="Canaan S."/>
            <person name="Deregnaucourt C."/>
            <person name="Schrevel J."/>
            <person name="Doglio A."/>
            <person name="Gutierrez J.M."/>
            <person name="Lazdunski M."/>
            <person name="Gelb M.H."/>
            <person name="Lambeau G."/>
        </authorList>
    </citation>
    <scope>FUNCTION</scope>
    <scope>TOXIC DOSE</scope>
</reference>
<feature type="signal peptide" evidence="1">
    <location>
        <begin position="1"/>
        <end position="27"/>
    </location>
</feature>
<feature type="chain" id="PRO_5000140339" description="Phospholipase A2 OS1">
    <location>
        <begin position="28"/>
        <end position="154"/>
    </location>
</feature>
<feature type="active site" evidence="1">
    <location>
        <position position="75"/>
    </location>
</feature>
<feature type="active site" evidence="1">
    <location>
        <position position="126"/>
    </location>
</feature>
<feature type="binding site" evidence="1">
    <location>
        <position position="57"/>
    </location>
    <ligand>
        <name>Ca(2+)</name>
        <dbReference type="ChEBI" id="CHEBI:29108"/>
    </ligand>
</feature>
<feature type="binding site" evidence="1">
    <location>
        <position position="59"/>
    </location>
    <ligand>
        <name>Ca(2+)</name>
        <dbReference type="ChEBI" id="CHEBI:29108"/>
    </ligand>
</feature>
<feature type="binding site" evidence="1">
    <location>
        <position position="76"/>
    </location>
    <ligand>
        <name>Ca(2+)</name>
        <dbReference type="ChEBI" id="CHEBI:29108"/>
    </ligand>
</feature>
<feature type="disulfide bond" evidence="1">
    <location>
        <begin position="38"/>
        <end position="104"/>
    </location>
</feature>
<feature type="disulfide bond" evidence="1">
    <location>
        <begin position="54"/>
        <end position="153"/>
    </location>
</feature>
<feature type="disulfide bond" evidence="1">
    <location>
        <begin position="56"/>
        <end position="72"/>
    </location>
</feature>
<feature type="disulfide bond" evidence="1">
    <location>
        <begin position="71"/>
        <end position="132"/>
    </location>
</feature>
<feature type="disulfide bond" evidence="1">
    <location>
        <begin position="78"/>
        <end position="125"/>
    </location>
</feature>
<feature type="disulfide bond" evidence="1">
    <location>
        <begin position="88"/>
        <end position="118"/>
    </location>
</feature>
<feature type="disulfide bond" evidence="1">
    <location>
        <begin position="111"/>
        <end position="123"/>
    </location>
</feature>